<dbReference type="EMBL" id="AE000516">
    <property type="protein sequence ID" value="AAK45613.1"/>
    <property type="molecule type" value="Genomic_DNA"/>
</dbReference>
<dbReference type="PIR" id="C70775">
    <property type="entry name" value="C70775"/>
</dbReference>
<dbReference type="RefSeq" id="WP_003406708.1">
    <property type="nucleotide sequence ID" value="NZ_KK341227.1"/>
</dbReference>
<dbReference type="SMR" id="P9WPV0"/>
<dbReference type="KEGG" id="mtc:MT1351"/>
<dbReference type="PATRIC" id="fig|83331.31.peg.1457"/>
<dbReference type="HOGENOM" id="CLU_084338_4_0_11"/>
<dbReference type="Proteomes" id="UP000001020">
    <property type="component" value="Chromosome"/>
</dbReference>
<dbReference type="GO" id="GO:0005886">
    <property type="term" value="C:plasma membrane"/>
    <property type="evidence" value="ECO:0007669"/>
    <property type="project" value="UniProtKB-SubCell"/>
</dbReference>
<dbReference type="GO" id="GO:0045259">
    <property type="term" value="C:proton-transporting ATP synthase complex"/>
    <property type="evidence" value="ECO:0007669"/>
    <property type="project" value="UniProtKB-KW"/>
</dbReference>
<dbReference type="GO" id="GO:0005524">
    <property type="term" value="F:ATP binding"/>
    <property type="evidence" value="ECO:0007669"/>
    <property type="project" value="UniProtKB-UniRule"/>
</dbReference>
<dbReference type="GO" id="GO:0046933">
    <property type="term" value="F:proton-transporting ATP synthase activity, rotational mechanism"/>
    <property type="evidence" value="ECO:0007669"/>
    <property type="project" value="UniProtKB-UniRule"/>
</dbReference>
<dbReference type="CDD" id="cd12152">
    <property type="entry name" value="F1-ATPase_delta"/>
    <property type="match status" value="1"/>
</dbReference>
<dbReference type="FunFam" id="2.60.15.10:FF:000011">
    <property type="entry name" value="ATP synthase epsilon chain"/>
    <property type="match status" value="1"/>
</dbReference>
<dbReference type="Gene3D" id="2.60.15.10">
    <property type="entry name" value="F0F1 ATP synthase delta/epsilon subunit, N-terminal"/>
    <property type="match status" value="1"/>
</dbReference>
<dbReference type="HAMAP" id="MF_00530">
    <property type="entry name" value="ATP_synth_epsil_bac"/>
    <property type="match status" value="1"/>
</dbReference>
<dbReference type="InterPro" id="IPR001469">
    <property type="entry name" value="ATP_synth_F1_dsu/esu"/>
</dbReference>
<dbReference type="InterPro" id="IPR020546">
    <property type="entry name" value="ATP_synth_F1_dsu/esu_N"/>
</dbReference>
<dbReference type="InterPro" id="IPR036771">
    <property type="entry name" value="ATPsynth_dsu/esu_N"/>
</dbReference>
<dbReference type="NCBIfam" id="TIGR01216">
    <property type="entry name" value="ATP_synt_epsi"/>
    <property type="match status" value="1"/>
</dbReference>
<dbReference type="NCBIfam" id="NF009977">
    <property type="entry name" value="PRK13442.1"/>
    <property type="match status" value="1"/>
</dbReference>
<dbReference type="PANTHER" id="PTHR13822">
    <property type="entry name" value="ATP SYNTHASE DELTA/EPSILON CHAIN"/>
    <property type="match status" value="1"/>
</dbReference>
<dbReference type="PANTHER" id="PTHR13822:SF10">
    <property type="entry name" value="ATP SYNTHASE EPSILON CHAIN, CHLOROPLASTIC"/>
    <property type="match status" value="1"/>
</dbReference>
<dbReference type="Pfam" id="PF02823">
    <property type="entry name" value="ATP-synt_DE_N"/>
    <property type="match status" value="1"/>
</dbReference>
<dbReference type="SUPFAM" id="SSF51344">
    <property type="entry name" value="Epsilon subunit of F1F0-ATP synthase N-terminal domain"/>
    <property type="match status" value="1"/>
</dbReference>
<sequence length="121" mass="13135">MAELNVEIVAVDRNIWSGTAKFLFTRTTVGEIGILPRHIPLVAQLVDDAMVRVEREGEKDLRIAVDGGFLSVTEEGVSILAESAEFESEIDEAAAKQDSESDDPRIAARGRARLRAVGAID</sequence>
<accession>P9WPV0</accession>
<accession>L0T995</accession>
<accession>P63662</accession>
<accession>Q10595</accession>
<feature type="chain" id="PRO_0000426902" description="ATP synthase epsilon chain">
    <location>
        <begin position="1"/>
        <end position="121"/>
    </location>
</feature>
<name>ATPE_MYCTO</name>
<proteinExistence type="inferred from homology"/>
<keyword id="KW-0066">ATP synthesis</keyword>
<keyword id="KW-1003">Cell membrane</keyword>
<keyword id="KW-0139">CF(1)</keyword>
<keyword id="KW-0375">Hydrogen ion transport</keyword>
<keyword id="KW-0406">Ion transport</keyword>
<keyword id="KW-0472">Membrane</keyword>
<keyword id="KW-1185">Reference proteome</keyword>
<keyword id="KW-0813">Transport</keyword>
<reference key="1">
    <citation type="journal article" date="2002" name="J. Bacteriol.">
        <title>Whole-genome comparison of Mycobacterium tuberculosis clinical and laboratory strains.</title>
        <authorList>
            <person name="Fleischmann R.D."/>
            <person name="Alland D."/>
            <person name="Eisen J.A."/>
            <person name="Carpenter L."/>
            <person name="White O."/>
            <person name="Peterson J.D."/>
            <person name="DeBoy R.T."/>
            <person name="Dodson R.J."/>
            <person name="Gwinn M.L."/>
            <person name="Haft D.H."/>
            <person name="Hickey E.K."/>
            <person name="Kolonay J.F."/>
            <person name="Nelson W.C."/>
            <person name="Umayam L.A."/>
            <person name="Ermolaeva M.D."/>
            <person name="Salzberg S.L."/>
            <person name="Delcher A."/>
            <person name="Utterback T.R."/>
            <person name="Weidman J.F."/>
            <person name="Khouri H.M."/>
            <person name="Gill J."/>
            <person name="Mikula A."/>
            <person name="Bishai W."/>
            <person name="Jacobs W.R. Jr."/>
            <person name="Venter J.C."/>
            <person name="Fraser C.M."/>
        </authorList>
    </citation>
    <scope>NUCLEOTIDE SEQUENCE [LARGE SCALE GENOMIC DNA]</scope>
    <source>
        <strain>CDC 1551 / Oshkosh</strain>
    </source>
</reference>
<comment type="function">
    <text evidence="1">Produces ATP from ADP in the presence of a proton gradient across the membrane.</text>
</comment>
<comment type="subunit">
    <text>F-type ATPases have 2 components, CF(1) - the catalytic core - and CF(0) - the membrane proton channel. CF(1) has five subunits: alpha(3), beta(3), gamma(1), delta(1), epsilon(1). CF(0) has three main subunits: a, b and c.</text>
</comment>
<comment type="subcellular location">
    <subcellularLocation>
        <location evidence="1">Cell membrane</location>
        <topology evidence="1">Peripheral membrane protein</topology>
    </subcellularLocation>
</comment>
<comment type="similarity">
    <text evidence="2">Belongs to the ATPase epsilon chain family.</text>
</comment>
<gene>
    <name type="primary">atpC</name>
    <name type="ordered locus">MT1351</name>
</gene>
<evidence type="ECO:0000250" key="1"/>
<evidence type="ECO:0000305" key="2"/>
<organism>
    <name type="scientific">Mycobacterium tuberculosis (strain CDC 1551 / Oshkosh)</name>
    <dbReference type="NCBI Taxonomy" id="83331"/>
    <lineage>
        <taxon>Bacteria</taxon>
        <taxon>Bacillati</taxon>
        <taxon>Actinomycetota</taxon>
        <taxon>Actinomycetes</taxon>
        <taxon>Mycobacteriales</taxon>
        <taxon>Mycobacteriaceae</taxon>
        <taxon>Mycobacterium</taxon>
        <taxon>Mycobacterium tuberculosis complex</taxon>
    </lineage>
</organism>
<protein>
    <recommendedName>
        <fullName>ATP synthase epsilon chain</fullName>
    </recommendedName>
    <alternativeName>
        <fullName>ATP synthase F1 sector epsilon subunit</fullName>
    </alternativeName>
    <alternativeName>
        <fullName>F-ATPase epsilon subunit</fullName>
    </alternativeName>
</protein>